<sequence length="189" mass="20393">MFWLLAIFAYLLGSLSFAILLSRLTGNPDPRMSGSGNAGATNMLRLAGKKLAVLTLLGDLCKGLAPVLIAHLAGLSLQQQAWVGLYAVLGHLFPLYFRFRGGKGVATAAGMLLGLYPPAALLAIAAWALTFYLTRTSSLAALIATPLTLPLLAWQEPEALLPMSVLTLLIVWRHRGNLRDLFAGRERHF</sequence>
<dbReference type="EC" id="2.3.1.275" evidence="1"/>
<dbReference type="EMBL" id="CP000076">
    <property type="protein sequence ID" value="AAY94852.1"/>
    <property type="molecule type" value="Genomic_DNA"/>
</dbReference>
<dbReference type="RefSeq" id="WP_011063837.1">
    <property type="nucleotide sequence ID" value="NC_004129.6"/>
</dbReference>
<dbReference type="SMR" id="Q4K4W5"/>
<dbReference type="STRING" id="220664.PFL_5659"/>
<dbReference type="GeneID" id="57478609"/>
<dbReference type="KEGG" id="pfl:PFL_5659"/>
<dbReference type="PATRIC" id="fig|220664.5.peg.5771"/>
<dbReference type="eggNOG" id="COG0344">
    <property type="taxonomic scope" value="Bacteria"/>
</dbReference>
<dbReference type="HOGENOM" id="CLU_081254_0_0_6"/>
<dbReference type="UniPathway" id="UPA00085"/>
<dbReference type="Proteomes" id="UP000008540">
    <property type="component" value="Chromosome"/>
</dbReference>
<dbReference type="GO" id="GO:0005886">
    <property type="term" value="C:plasma membrane"/>
    <property type="evidence" value="ECO:0007669"/>
    <property type="project" value="UniProtKB-SubCell"/>
</dbReference>
<dbReference type="GO" id="GO:0043772">
    <property type="term" value="F:acyl-phosphate glycerol-3-phosphate acyltransferase activity"/>
    <property type="evidence" value="ECO:0007669"/>
    <property type="project" value="UniProtKB-UniRule"/>
</dbReference>
<dbReference type="GO" id="GO:0008654">
    <property type="term" value="P:phospholipid biosynthetic process"/>
    <property type="evidence" value="ECO:0007669"/>
    <property type="project" value="UniProtKB-UniRule"/>
</dbReference>
<dbReference type="HAMAP" id="MF_01043">
    <property type="entry name" value="PlsY"/>
    <property type="match status" value="1"/>
</dbReference>
<dbReference type="InterPro" id="IPR003811">
    <property type="entry name" value="G3P_acylTferase_PlsY"/>
</dbReference>
<dbReference type="NCBIfam" id="TIGR00023">
    <property type="entry name" value="glycerol-3-phosphate 1-O-acyltransferase PlsY"/>
    <property type="match status" value="1"/>
</dbReference>
<dbReference type="PANTHER" id="PTHR30309:SF0">
    <property type="entry name" value="GLYCEROL-3-PHOSPHATE ACYLTRANSFERASE-RELATED"/>
    <property type="match status" value="1"/>
</dbReference>
<dbReference type="PANTHER" id="PTHR30309">
    <property type="entry name" value="INNER MEMBRANE PROTEIN YGIH"/>
    <property type="match status" value="1"/>
</dbReference>
<dbReference type="Pfam" id="PF02660">
    <property type="entry name" value="G3P_acyltransf"/>
    <property type="match status" value="1"/>
</dbReference>
<dbReference type="SMART" id="SM01207">
    <property type="entry name" value="G3P_acyltransf"/>
    <property type="match status" value="1"/>
</dbReference>
<proteinExistence type="inferred from homology"/>
<protein>
    <recommendedName>
        <fullName evidence="1">Glycerol-3-phosphate acyltransferase</fullName>
    </recommendedName>
    <alternativeName>
        <fullName evidence="1">Acyl-PO4 G3P acyltransferase</fullName>
    </alternativeName>
    <alternativeName>
        <fullName evidence="1">Acyl-phosphate--glycerol-3-phosphate acyltransferase</fullName>
    </alternativeName>
    <alternativeName>
        <fullName evidence="1">G3P acyltransferase</fullName>
        <shortName evidence="1">GPAT</shortName>
        <ecNumber evidence="1">2.3.1.275</ecNumber>
    </alternativeName>
    <alternativeName>
        <fullName evidence="1">Lysophosphatidic acid synthase</fullName>
        <shortName evidence="1">LPA synthase</shortName>
    </alternativeName>
</protein>
<keyword id="KW-0997">Cell inner membrane</keyword>
<keyword id="KW-1003">Cell membrane</keyword>
<keyword id="KW-0444">Lipid biosynthesis</keyword>
<keyword id="KW-0443">Lipid metabolism</keyword>
<keyword id="KW-0472">Membrane</keyword>
<keyword id="KW-0594">Phospholipid biosynthesis</keyword>
<keyword id="KW-1208">Phospholipid metabolism</keyword>
<keyword id="KW-0808">Transferase</keyword>
<keyword id="KW-0812">Transmembrane</keyword>
<keyword id="KW-1133">Transmembrane helix</keyword>
<gene>
    <name evidence="1" type="primary">plsY</name>
    <name type="ordered locus">PFL_5659</name>
</gene>
<accession>Q4K4W5</accession>
<evidence type="ECO:0000255" key="1">
    <source>
        <dbReference type="HAMAP-Rule" id="MF_01043"/>
    </source>
</evidence>
<organism>
    <name type="scientific">Pseudomonas fluorescens (strain ATCC BAA-477 / NRRL B-23932 / Pf-5)</name>
    <dbReference type="NCBI Taxonomy" id="220664"/>
    <lineage>
        <taxon>Bacteria</taxon>
        <taxon>Pseudomonadati</taxon>
        <taxon>Pseudomonadota</taxon>
        <taxon>Gammaproteobacteria</taxon>
        <taxon>Pseudomonadales</taxon>
        <taxon>Pseudomonadaceae</taxon>
        <taxon>Pseudomonas</taxon>
    </lineage>
</organism>
<feature type="chain" id="PRO_0000188429" description="Glycerol-3-phosphate acyltransferase">
    <location>
        <begin position="1"/>
        <end position="189"/>
    </location>
</feature>
<feature type="transmembrane region" description="Helical" evidence="1">
    <location>
        <begin position="1"/>
        <end position="21"/>
    </location>
</feature>
<feature type="transmembrane region" description="Helical" evidence="1">
    <location>
        <begin position="51"/>
        <end position="71"/>
    </location>
</feature>
<feature type="transmembrane region" description="Helical" evidence="1">
    <location>
        <begin position="77"/>
        <end position="97"/>
    </location>
</feature>
<feature type="transmembrane region" description="Helical" evidence="1">
    <location>
        <begin position="111"/>
        <end position="131"/>
    </location>
</feature>
<feature type="transmembrane region" description="Helical" evidence="1">
    <location>
        <begin position="151"/>
        <end position="171"/>
    </location>
</feature>
<comment type="function">
    <text evidence="1">Catalyzes the transfer of an acyl group from acyl-phosphate (acyl-PO(4)) to glycerol-3-phosphate (G3P) to form lysophosphatidic acid (LPA). This enzyme utilizes acyl-phosphate as fatty acyl donor, but not acyl-CoA or acyl-ACP.</text>
</comment>
<comment type="catalytic activity">
    <reaction evidence="1">
        <text>an acyl phosphate + sn-glycerol 3-phosphate = a 1-acyl-sn-glycero-3-phosphate + phosphate</text>
        <dbReference type="Rhea" id="RHEA:34075"/>
        <dbReference type="ChEBI" id="CHEBI:43474"/>
        <dbReference type="ChEBI" id="CHEBI:57597"/>
        <dbReference type="ChEBI" id="CHEBI:57970"/>
        <dbReference type="ChEBI" id="CHEBI:59918"/>
        <dbReference type="EC" id="2.3.1.275"/>
    </reaction>
</comment>
<comment type="pathway">
    <text evidence="1">Lipid metabolism; phospholipid metabolism.</text>
</comment>
<comment type="subunit">
    <text evidence="1">Probably interacts with PlsX.</text>
</comment>
<comment type="subcellular location">
    <subcellularLocation>
        <location evidence="1">Cell inner membrane</location>
        <topology evidence="1">Multi-pass membrane protein</topology>
    </subcellularLocation>
</comment>
<comment type="similarity">
    <text evidence="1">Belongs to the PlsY family.</text>
</comment>
<reference key="1">
    <citation type="journal article" date="2005" name="Nat. Biotechnol.">
        <title>Complete genome sequence of the plant commensal Pseudomonas fluorescens Pf-5.</title>
        <authorList>
            <person name="Paulsen I.T."/>
            <person name="Press C.M."/>
            <person name="Ravel J."/>
            <person name="Kobayashi D.Y."/>
            <person name="Myers G.S.A."/>
            <person name="Mavrodi D.V."/>
            <person name="DeBoy R.T."/>
            <person name="Seshadri R."/>
            <person name="Ren Q."/>
            <person name="Madupu R."/>
            <person name="Dodson R.J."/>
            <person name="Durkin A.S."/>
            <person name="Brinkac L.M."/>
            <person name="Daugherty S.C."/>
            <person name="Sullivan S.A."/>
            <person name="Rosovitz M.J."/>
            <person name="Gwinn M.L."/>
            <person name="Zhou L."/>
            <person name="Schneider D.J."/>
            <person name="Cartinhour S.W."/>
            <person name="Nelson W.C."/>
            <person name="Weidman J."/>
            <person name="Watkins K."/>
            <person name="Tran K."/>
            <person name="Khouri H."/>
            <person name="Pierson E.A."/>
            <person name="Pierson L.S. III"/>
            <person name="Thomashow L.S."/>
            <person name="Loper J.E."/>
        </authorList>
    </citation>
    <scope>NUCLEOTIDE SEQUENCE [LARGE SCALE GENOMIC DNA]</scope>
    <source>
        <strain>ATCC BAA-477 / NRRL B-23932 / Pf-5</strain>
    </source>
</reference>
<name>PLSY_PSEF5</name>